<reference key="1">
    <citation type="journal article" date="2005" name="J. Bacteriol.">
        <title>Whole-genome sequence analysis of Pseudomonas syringae pv. phaseolicola 1448A reveals divergence among pathovars in genes involved in virulence and transposition.</title>
        <authorList>
            <person name="Joardar V."/>
            <person name="Lindeberg M."/>
            <person name="Jackson R.W."/>
            <person name="Selengut J."/>
            <person name="Dodson R."/>
            <person name="Brinkac L.M."/>
            <person name="Daugherty S.C."/>
            <person name="DeBoy R.T."/>
            <person name="Durkin A.S."/>
            <person name="Gwinn Giglio M."/>
            <person name="Madupu R."/>
            <person name="Nelson W.C."/>
            <person name="Rosovitz M.J."/>
            <person name="Sullivan S.A."/>
            <person name="Crabtree J."/>
            <person name="Creasy T."/>
            <person name="Davidsen T.M."/>
            <person name="Haft D.H."/>
            <person name="Zafar N."/>
            <person name="Zhou L."/>
            <person name="Halpin R."/>
            <person name="Holley T."/>
            <person name="Khouri H.M."/>
            <person name="Feldblyum T.V."/>
            <person name="White O."/>
            <person name="Fraser C.M."/>
            <person name="Chatterjee A.K."/>
            <person name="Cartinhour S."/>
            <person name="Schneider D."/>
            <person name="Mansfield J.W."/>
            <person name="Collmer A."/>
            <person name="Buell R."/>
        </authorList>
    </citation>
    <scope>NUCLEOTIDE SEQUENCE [LARGE SCALE GENOMIC DNA]</scope>
    <source>
        <strain>1448A / Race 6</strain>
    </source>
</reference>
<comment type="function">
    <text evidence="1">Involved in the aerobic and anaerobic degradation of long-chain fatty acids via beta-oxidation cycle. Catalyzes the formation of 3-oxoacyl-CoA from enoyl-CoA via L-3-hydroxyacyl-CoA. It can also use D-3-hydroxyacyl-CoA and cis-3-enoyl-CoA as substrate.</text>
</comment>
<comment type="catalytic activity">
    <reaction evidence="1">
        <text>a (3S)-3-hydroxyacyl-CoA + NAD(+) = a 3-oxoacyl-CoA + NADH + H(+)</text>
        <dbReference type="Rhea" id="RHEA:22432"/>
        <dbReference type="ChEBI" id="CHEBI:15378"/>
        <dbReference type="ChEBI" id="CHEBI:57318"/>
        <dbReference type="ChEBI" id="CHEBI:57540"/>
        <dbReference type="ChEBI" id="CHEBI:57945"/>
        <dbReference type="ChEBI" id="CHEBI:90726"/>
        <dbReference type="EC" id="1.1.1.35"/>
    </reaction>
</comment>
<comment type="catalytic activity">
    <reaction evidence="1">
        <text>a (3S)-3-hydroxyacyl-CoA = a (2E)-enoyl-CoA + H2O</text>
        <dbReference type="Rhea" id="RHEA:16105"/>
        <dbReference type="ChEBI" id="CHEBI:15377"/>
        <dbReference type="ChEBI" id="CHEBI:57318"/>
        <dbReference type="ChEBI" id="CHEBI:58856"/>
        <dbReference type="EC" id="4.2.1.17"/>
    </reaction>
</comment>
<comment type="catalytic activity">
    <reaction evidence="1">
        <text>a 4-saturated-(3S)-3-hydroxyacyl-CoA = a (3E)-enoyl-CoA + H2O</text>
        <dbReference type="Rhea" id="RHEA:20724"/>
        <dbReference type="ChEBI" id="CHEBI:15377"/>
        <dbReference type="ChEBI" id="CHEBI:58521"/>
        <dbReference type="ChEBI" id="CHEBI:137480"/>
        <dbReference type="EC" id="4.2.1.17"/>
    </reaction>
</comment>
<comment type="catalytic activity">
    <reaction evidence="1">
        <text>(3S)-3-hydroxybutanoyl-CoA = (3R)-3-hydroxybutanoyl-CoA</text>
        <dbReference type="Rhea" id="RHEA:21760"/>
        <dbReference type="ChEBI" id="CHEBI:57315"/>
        <dbReference type="ChEBI" id="CHEBI:57316"/>
        <dbReference type="EC" id="5.1.2.3"/>
    </reaction>
</comment>
<comment type="catalytic activity">
    <reaction evidence="1">
        <text>a (3Z)-enoyl-CoA = a 4-saturated (2E)-enoyl-CoA</text>
        <dbReference type="Rhea" id="RHEA:45900"/>
        <dbReference type="ChEBI" id="CHEBI:85097"/>
        <dbReference type="ChEBI" id="CHEBI:85489"/>
        <dbReference type="EC" id="5.3.3.8"/>
    </reaction>
</comment>
<comment type="catalytic activity">
    <reaction evidence="1">
        <text>a (3E)-enoyl-CoA = a 4-saturated (2E)-enoyl-CoA</text>
        <dbReference type="Rhea" id="RHEA:45228"/>
        <dbReference type="ChEBI" id="CHEBI:58521"/>
        <dbReference type="ChEBI" id="CHEBI:85097"/>
        <dbReference type="EC" id="5.3.3.8"/>
    </reaction>
</comment>
<comment type="pathway">
    <text evidence="1">Lipid metabolism; fatty acid beta-oxidation.</text>
</comment>
<comment type="subunit">
    <text evidence="1">Heterotetramer of two alpha chains (FadB) and two beta chains (FadA).</text>
</comment>
<comment type="similarity">
    <text evidence="1">In the N-terminal section; belongs to the enoyl-CoA hydratase/isomerase family.</text>
</comment>
<comment type="similarity">
    <text evidence="1">In the C-terminal section; belongs to the 3-hydroxyacyl-CoA dehydrogenase family.</text>
</comment>
<proteinExistence type="inferred from homology"/>
<sequence>MIYEGKAITVKALESGIVELNFDLKGESVNKFNRLTLNELRQAVDAIKADASVKGVIVSSGKDVFIVGADITEFVDNFKLPEAELVAGNLQANRIFSDFEDLGVPTVVAINGIALGGGLEMCLAADYRVISSSARIGLPEVKLGLYPGFGGTVRLPRIIGADNAIEWIASGKESSAEDALKVGAVDAVVAPEKLQAAALDLIQRAISGEFDYKAKRQPKLDKLKLNAIEQMMAFETAKGFVAGQAGPNYPAPVEAIKTIQKAANFGRDKALEIEAAGFVKMAKTSAAQSLIGLFLNDQELKKKAKGYDAVAKDVKQAAVLGAGIMGGGIAYQSAVKGTPILMKDIREEAIQLGLNEASKLLGGRLEKGRLTAAKMAEALNAIRPTLSYGDFGNVDLVVEAVVENPKVKQAVLAEVEANVGEHTILASNTSTISISLLAKALKRPENFVGMHFFNPVHMMPLVEVIRGEKSSEEAVATTVAYARKMGKNPIVVNDCPGFLVNRVLFPYFGGFARLVSAGVDFVRIDKVMEKFGWPMGPAYLMDVVGIDTGHHGRDVMAEGFPDRMKDDRRSVVDALYEAKRLGQKNGKGFYAYETDKKGKPKKVNDPAVLDVLKPIVYEQREVSDEDIINWMMIPLCLETVRCLEDGIVETAAEADMGLIYGIGFPPFRGGALRYIDSIGVAEFVALADQYAELGALYQPTAKLREMASKGQSFFGQASSEE</sequence>
<name>FADB_PSE14</name>
<keyword id="KW-0276">Fatty acid metabolism</keyword>
<keyword id="KW-0413">Isomerase</keyword>
<keyword id="KW-0442">Lipid degradation</keyword>
<keyword id="KW-0443">Lipid metabolism</keyword>
<keyword id="KW-0456">Lyase</keyword>
<keyword id="KW-0511">Multifunctional enzyme</keyword>
<keyword id="KW-0520">NAD</keyword>
<keyword id="KW-0560">Oxidoreductase</keyword>
<accession>Q48GW3</accession>
<protein>
    <recommendedName>
        <fullName evidence="1">Fatty acid oxidation complex subunit alpha</fullName>
    </recommendedName>
    <domain>
        <recommendedName>
            <fullName evidence="1">Enoyl-CoA hydratase/Delta(3)-cis-Delta(2)-trans-enoyl-CoA isomerase/3-hydroxybutyryl-CoA epimerase</fullName>
            <ecNumber evidence="1">4.2.1.17</ecNumber>
            <ecNumber evidence="1">5.1.2.3</ecNumber>
            <ecNumber evidence="1">5.3.3.8</ecNumber>
        </recommendedName>
    </domain>
    <domain>
        <recommendedName>
            <fullName evidence="1">3-hydroxyacyl-CoA dehydrogenase</fullName>
            <ecNumber evidence="1">1.1.1.35</ecNumber>
        </recommendedName>
    </domain>
</protein>
<dbReference type="EC" id="4.2.1.17" evidence="1"/>
<dbReference type="EC" id="5.1.2.3" evidence="1"/>
<dbReference type="EC" id="5.3.3.8" evidence="1"/>
<dbReference type="EC" id="1.1.1.35" evidence="1"/>
<dbReference type="EMBL" id="CP000058">
    <property type="protein sequence ID" value="AAZ34330.1"/>
    <property type="molecule type" value="Genomic_DNA"/>
</dbReference>
<dbReference type="RefSeq" id="WP_004665750.1">
    <property type="nucleotide sequence ID" value="NC_005773.3"/>
</dbReference>
<dbReference type="SMR" id="Q48GW3"/>
<dbReference type="KEGG" id="psp:PSPPH_3210"/>
<dbReference type="eggNOG" id="COG1024">
    <property type="taxonomic scope" value="Bacteria"/>
</dbReference>
<dbReference type="eggNOG" id="COG1250">
    <property type="taxonomic scope" value="Bacteria"/>
</dbReference>
<dbReference type="HOGENOM" id="CLU_009834_16_3_6"/>
<dbReference type="UniPathway" id="UPA00659"/>
<dbReference type="Proteomes" id="UP000000551">
    <property type="component" value="Chromosome"/>
</dbReference>
<dbReference type="GO" id="GO:0036125">
    <property type="term" value="C:fatty acid beta-oxidation multienzyme complex"/>
    <property type="evidence" value="ECO:0007669"/>
    <property type="project" value="InterPro"/>
</dbReference>
<dbReference type="GO" id="GO:0008692">
    <property type="term" value="F:3-hydroxybutyryl-CoA epimerase activity"/>
    <property type="evidence" value="ECO:0007669"/>
    <property type="project" value="UniProtKB-UniRule"/>
</dbReference>
<dbReference type="GO" id="GO:0004165">
    <property type="term" value="F:delta(3)-delta(2)-enoyl-CoA isomerase activity"/>
    <property type="evidence" value="ECO:0007669"/>
    <property type="project" value="UniProtKB-UniRule"/>
</dbReference>
<dbReference type="GO" id="GO:0004300">
    <property type="term" value="F:enoyl-CoA hydratase activity"/>
    <property type="evidence" value="ECO:0007669"/>
    <property type="project" value="UniProtKB-UniRule"/>
</dbReference>
<dbReference type="GO" id="GO:0016509">
    <property type="term" value="F:long-chain-3-hydroxyacyl-CoA dehydrogenase activity"/>
    <property type="evidence" value="ECO:0007669"/>
    <property type="project" value="TreeGrafter"/>
</dbReference>
<dbReference type="GO" id="GO:0070403">
    <property type="term" value="F:NAD+ binding"/>
    <property type="evidence" value="ECO:0007669"/>
    <property type="project" value="InterPro"/>
</dbReference>
<dbReference type="GO" id="GO:0006635">
    <property type="term" value="P:fatty acid beta-oxidation"/>
    <property type="evidence" value="ECO:0007669"/>
    <property type="project" value="UniProtKB-UniRule"/>
</dbReference>
<dbReference type="CDD" id="cd06558">
    <property type="entry name" value="crotonase-like"/>
    <property type="match status" value="1"/>
</dbReference>
<dbReference type="FunFam" id="1.10.1040.50:FF:000001">
    <property type="entry name" value="Fatty acid oxidation complex subunit alpha"/>
    <property type="match status" value="1"/>
</dbReference>
<dbReference type="FunFam" id="3.90.226.10:FF:000018">
    <property type="entry name" value="Fatty acid oxidation complex subunit alpha"/>
    <property type="match status" value="1"/>
</dbReference>
<dbReference type="FunFam" id="3.40.50.720:FF:000009">
    <property type="entry name" value="Fatty oxidation complex, alpha subunit"/>
    <property type="match status" value="1"/>
</dbReference>
<dbReference type="Gene3D" id="1.10.1040.50">
    <property type="match status" value="1"/>
</dbReference>
<dbReference type="Gene3D" id="3.90.226.10">
    <property type="entry name" value="2-enoyl-CoA Hydratase, Chain A, domain 1"/>
    <property type="match status" value="1"/>
</dbReference>
<dbReference type="Gene3D" id="3.40.50.720">
    <property type="entry name" value="NAD(P)-binding Rossmann-like Domain"/>
    <property type="match status" value="1"/>
</dbReference>
<dbReference type="HAMAP" id="MF_01621">
    <property type="entry name" value="FadB"/>
    <property type="match status" value="1"/>
</dbReference>
<dbReference type="InterPro" id="IPR006180">
    <property type="entry name" value="3-OHacyl-CoA_DH_CS"/>
</dbReference>
<dbReference type="InterPro" id="IPR006176">
    <property type="entry name" value="3-OHacyl-CoA_DH_NAD-bd"/>
</dbReference>
<dbReference type="InterPro" id="IPR006108">
    <property type="entry name" value="3HC_DH_C"/>
</dbReference>
<dbReference type="InterPro" id="IPR008927">
    <property type="entry name" value="6-PGluconate_DH-like_C_sf"/>
</dbReference>
<dbReference type="InterPro" id="IPR029045">
    <property type="entry name" value="ClpP/crotonase-like_dom_sf"/>
</dbReference>
<dbReference type="InterPro" id="IPR001753">
    <property type="entry name" value="Enoyl-CoA_hydra/iso"/>
</dbReference>
<dbReference type="InterPro" id="IPR050136">
    <property type="entry name" value="FA_oxidation_alpha_subunit"/>
</dbReference>
<dbReference type="InterPro" id="IPR012799">
    <property type="entry name" value="FadB"/>
</dbReference>
<dbReference type="InterPro" id="IPR036291">
    <property type="entry name" value="NAD(P)-bd_dom_sf"/>
</dbReference>
<dbReference type="NCBIfam" id="TIGR02437">
    <property type="entry name" value="FadB"/>
    <property type="match status" value="1"/>
</dbReference>
<dbReference type="NCBIfam" id="NF008727">
    <property type="entry name" value="PRK11730.1"/>
    <property type="match status" value="1"/>
</dbReference>
<dbReference type="PANTHER" id="PTHR43612">
    <property type="entry name" value="TRIFUNCTIONAL ENZYME SUBUNIT ALPHA"/>
    <property type="match status" value="1"/>
</dbReference>
<dbReference type="PANTHER" id="PTHR43612:SF3">
    <property type="entry name" value="TRIFUNCTIONAL ENZYME SUBUNIT ALPHA, MITOCHONDRIAL"/>
    <property type="match status" value="1"/>
</dbReference>
<dbReference type="Pfam" id="PF00725">
    <property type="entry name" value="3HCDH"/>
    <property type="match status" value="1"/>
</dbReference>
<dbReference type="Pfam" id="PF02737">
    <property type="entry name" value="3HCDH_N"/>
    <property type="match status" value="1"/>
</dbReference>
<dbReference type="Pfam" id="PF00378">
    <property type="entry name" value="ECH_1"/>
    <property type="match status" value="1"/>
</dbReference>
<dbReference type="SUPFAM" id="SSF48179">
    <property type="entry name" value="6-phosphogluconate dehydrogenase C-terminal domain-like"/>
    <property type="match status" value="2"/>
</dbReference>
<dbReference type="SUPFAM" id="SSF52096">
    <property type="entry name" value="ClpP/crotonase"/>
    <property type="match status" value="1"/>
</dbReference>
<dbReference type="SUPFAM" id="SSF51735">
    <property type="entry name" value="NAD(P)-binding Rossmann-fold domains"/>
    <property type="match status" value="1"/>
</dbReference>
<dbReference type="PROSITE" id="PS00067">
    <property type="entry name" value="3HCDH"/>
    <property type="match status" value="1"/>
</dbReference>
<evidence type="ECO:0000255" key="1">
    <source>
        <dbReference type="HAMAP-Rule" id="MF_01621"/>
    </source>
</evidence>
<gene>
    <name evidence="1" type="primary">fadB</name>
    <name type="ordered locus">PSPPH_3210</name>
</gene>
<organism>
    <name type="scientific">Pseudomonas savastanoi pv. phaseolicola (strain 1448A / Race 6)</name>
    <name type="common">Pseudomonas syringae pv. phaseolicola (strain 1448A / Race 6)</name>
    <dbReference type="NCBI Taxonomy" id="264730"/>
    <lineage>
        <taxon>Bacteria</taxon>
        <taxon>Pseudomonadati</taxon>
        <taxon>Pseudomonadota</taxon>
        <taxon>Gammaproteobacteria</taxon>
        <taxon>Pseudomonadales</taxon>
        <taxon>Pseudomonadaceae</taxon>
        <taxon>Pseudomonas</taxon>
    </lineage>
</organism>
<feature type="chain" id="PRO_0000109280" description="Fatty acid oxidation complex subunit alpha">
    <location>
        <begin position="1"/>
        <end position="721"/>
    </location>
</feature>
<feature type="region of interest" description="Enoyl-CoA hydratase/isomerase" evidence="1">
    <location>
        <begin position="1"/>
        <end position="190"/>
    </location>
</feature>
<feature type="region of interest" description="3-hydroxyacyl-CoA dehydrogenase" evidence="1">
    <location>
        <begin position="312"/>
        <end position="721"/>
    </location>
</feature>
<feature type="active site" description="For 3-hydroxyacyl-CoA dehydrogenase activity" evidence="1">
    <location>
        <position position="451"/>
    </location>
</feature>
<feature type="binding site" evidence="1">
    <location>
        <position position="297"/>
    </location>
    <ligand>
        <name>substrate</name>
    </ligand>
</feature>
<feature type="binding site" evidence="1">
    <location>
        <position position="325"/>
    </location>
    <ligand>
        <name>NAD(+)</name>
        <dbReference type="ChEBI" id="CHEBI:57540"/>
    </ligand>
</feature>
<feature type="binding site" evidence="1">
    <location>
        <position position="344"/>
    </location>
    <ligand>
        <name>NAD(+)</name>
        <dbReference type="ChEBI" id="CHEBI:57540"/>
    </ligand>
</feature>
<feature type="binding site" evidence="1">
    <location>
        <begin position="401"/>
        <end position="403"/>
    </location>
    <ligand>
        <name>NAD(+)</name>
        <dbReference type="ChEBI" id="CHEBI:57540"/>
    </ligand>
</feature>
<feature type="binding site" evidence="1">
    <location>
        <position position="408"/>
    </location>
    <ligand>
        <name>NAD(+)</name>
        <dbReference type="ChEBI" id="CHEBI:57540"/>
    </ligand>
</feature>
<feature type="binding site" evidence="1">
    <location>
        <position position="430"/>
    </location>
    <ligand>
        <name>NAD(+)</name>
        <dbReference type="ChEBI" id="CHEBI:57540"/>
    </ligand>
</feature>
<feature type="binding site" evidence="1">
    <location>
        <position position="454"/>
    </location>
    <ligand>
        <name>NAD(+)</name>
        <dbReference type="ChEBI" id="CHEBI:57540"/>
    </ligand>
</feature>
<feature type="binding site" evidence="1">
    <location>
        <position position="501"/>
    </location>
    <ligand>
        <name>substrate</name>
    </ligand>
</feature>
<feature type="binding site" evidence="1">
    <location>
        <position position="660"/>
    </location>
    <ligand>
        <name>substrate</name>
    </ligand>
</feature>
<feature type="site" description="Important for catalytic activity" evidence="1">
    <location>
        <position position="120"/>
    </location>
</feature>
<feature type="site" description="Important for catalytic activity" evidence="1">
    <location>
        <position position="140"/>
    </location>
</feature>